<feature type="chain" id="PRO_1000123466" description="Phosphoserine aminotransferase">
    <location>
        <begin position="1"/>
        <end position="362"/>
    </location>
</feature>
<feature type="binding site" evidence="1">
    <location>
        <position position="43"/>
    </location>
    <ligand>
        <name>L-glutamate</name>
        <dbReference type="ChEBI" id="CHEBI:29985"/>
    </ligand>
</feature>
<feature type="binding site" evidence="1">
    <location>
        <begin position="77"/>
        <end position="78"/>
    </location>
    <ligand>
        <name>pyridoxal 5'-phosphate</name>
        <dbReference type="ChEBI" id="CHEBI:597326"/>
    </ligand>
</feature>
<feature type="binding site" evidence="1">
    <location>
        <position position="103"/>
    </location>
    <ligand>
        <name>pyridoxal 5'-phosphate</name>
        <dbReference type="ChEBI" id="CHEBI:597326"/>
    </ligand>
</feature>
<feature type="binding site" evidence="1">
    <location>
        <position position="153"/>
    </location>
    <ligand>
        <name>pyridoxal 5'-phosphate</name>
        <dbReference type="ChEBI" id="CHEBI:597326"/>
    </ligand>
</feature>
<feature type="binding site" evidence="1">
    <location>
        <position position="173"/>
    </location>
    <ligand>
        <name>pyridoxal 5'-phosphate</name>
        <dbReference type="ChEBI" id="CHEBI:597326"/>
    </ligand>
</feature>
<feature type="binding site" evidence="1">
    <location>
        <position position="196"/>
    </location>
    <ligand>
        <name>pyridoxal 5'-phosphate</name>
        <dbReference type="ChEBI" id="CHEBI:597326"/>
    </ligand>
</feature>
<feature type="binding site" evidence="1">
    <location>
        <begin position="238"/>
        <end position="239"/>
    </location>
    <ligand>
        <name>pyridoxal 5'-phosphate</name>
        <dbReference type="ChEBI" id="CHEBI:597326"/>
    </ligand>
</feature>
<feature type="modified residue" description="N6-(pyridoxal phosphate)lysine" evidence="1">
    <location>
        <position position="197"/>
    </location>
</feature>
<organism>
    <name type="scientific">Acidithiobacillus ferrooxidans (strain ATCC 53993 / BNL-5-31)</name>
    <name type="common">Leptospirillum ferrooxidans (ATCC 53993)</name>
    <dbReference type="NCBI Taxonomy" id="380394"/>
    <lineage>
        <taxon>Bacteria</taxon>
        <taxon>Pseudomonadati</taxon>
        <taxon>Pseudomonadota</taxon>
        <taxon>Acidithiobacillia</taxon>
        <taxon>Acidithiobacillales</taxon>
        <taxon>Acidithiobacillaceae</taxon>
        <taxon>Acidithiobacillus</taxon>
    </lineage>
</organism>
<gene>
    <name evidence="1" type="primary">serC</name>
    <name type="ordered locus">Lferr_1017</name>
</gene>
<reference key="1">
    <citation type="submission" date="2008-08" db="EMBL/GenBank/DDBJ databases">
        <title>Complete sequence of Acidithiobacillus ferrooxidans ATCC 53993.</title>
        <authorList>
            <person name="Lucas S."/>
            <person name="Copeland A."/>
            <person name="Lapidus A."/>
            <person name="Glavina del Rio T."/>
            <person name="Dalin E."/>
            <person name="Tice H."/>
            <person name="Bruce D."/>
            <person name="Goodwin L."/>
            <person name="Pitluck S."/>
            <person name="Sims D."/>
            <person name="Brettin T."/>
            <person name="Detter J.C."/>
            <person name="Han C."/>
            <person name="Kuske C.R."/>
            <person name="Larimer F."/>
            <person name="Land M."/>
            <person name="Hauser L."/>
            <person name="Kyrpides N."/>
            <person name="Lykidis A."/>
            <person name="Borole A.P."/>
        </authorList>
    </citation>
    <scope>NUCLEOTIDE SEQUENCE [LARGE SCALE GENOMIC DNA]</scope>
    <source>
        <strain>ATCC 53993 / BNL-5-31</strain>
    </source>
</reference>
<evidence type="ECO:0000255" key="1">
    <source>
        <dbReference type="HAMAP-Rule" id="MF_00160"/>
    </source>
</evidence>
<accession>B5EPR5</accession>
<name>SERC_ACIF5</name>
<proteinExistence type="inferred from homology"/>
<protein>
    <recommendedName>
        <fullName evidence="1">Phosphoserine aminotransferase</fullName>
        <ecNumber evidence="1">2.6.1.52</ecNumber>
    </recommendedName>
    <alternativeName>
        <fullName evidence="1">Phosphohydroxythreonine aminotransferase</fullName>
        <shortName evidence="1">PSAT</shortName>
    </alternativeName>
</protein>
<keyword id="KW-0028">Amino-acid biosynthesis</keyword>
<keyword id="KW-0032">Aminotransferase</keyword>
<keyword id="KW-0963">Cytoplasm</keyword>
<keyword id="KW-0663">Pyridoxal phosphate</keyword>
<keyword id="KW-0664">Pyridoxine biosynthesis</keyword>
<keyword id="KW-0718">Serine biosynthesis</keyword>
<keyword id="KW-0808">Transferase</keyword>
<comment type="function">
    <text evidence="1">Catalyzes the reversible conversion of 3-phosphohydroxypyruvate to phosphoserine and of 3-hydroxy-2-oxo-4-phosphonooxybutanoate to phosphohydroxythreonine.</text>
</comment>
<comment type="catalytic activity">
    <reaction evidence="1">
        <text>O-phospho-L-serine + 2-oxoglutarate = 3-phosphooxypyruvate + L-glutamate</text>
        <dbReference type="Rhea" id="RHEA:14329"/>
        <dbReference type="ChEBI" id="CHEBI:16810"/>
        <dbReference type="ChEBI" id="CHEBI:18110"/>
        <dbReference type="ChEBI" id="CHEBI:29985"/>
        <dbReference type="ChEBI" id="CHEBI:57524"/>
        <dbReference type="EC" id="2.6.1.52"/>
    </reaction>
</comment>
<comment type="catalytic activity">
    <reaction evidence="1">
        <text>4-(phosphooxy)-L-threonine + 2-oxoglutarate = (R)-3-hydroxy-2-oxo-4-phosphooxybutanoate + L-glutamate</text>
        <dbReference type="Rhea" id="RHEA:16573"/>
        <dbReference type="ChEBI" id="CHEBI:16810"/>
        <dbReference type="ChEBI" id="CHEBI:29985"/>
        <dbReference type="ChEBI" id="CHEBI:58452"/>
        <dbReference type="ChEBI" id="CHEBI:58538"/>
        <dbReference type="EC" id="2.6.1.52"/>
    </reaction>
</comment>
<comment type="cofactor">
    <cofactor evidence="1">
        <name>pyridoxal 5'-phosphate</name>
        <dbReference type="ChEBI" id="CHEBI:597326"/>
    </cofactor>
    <text evidence="1">Binds 1 pyridoxal phosphate per subunit.</text>
</comment>
<comment type="pathway">
    <text evidence="1">Amino-acid biosynthesis; L-serine biosynthesis; L-serine from 3-phospho-D-glycerate: step 2/3.</text>
</comment>
<comment type="pathway">
    <text evidence="1">Cofactor biosynthesis; pyridoxine 5'-phosphate biosynthesis; pyridoxine 5'-phosphate from D-erythrose 4-phosphate: step 3/5.</text>
</comment>
<comment type="subunit">
    <text evidence="1">Homodimer.</text>
</comment>
<comment type="subcellular location">
    <subcellularLocation>
        <location evidence="1">Cytoplasm</location>
    </subcellularLocation>
</comment>
<comment type="similarity">
    <text evidence="1">Belongs to the class-V pyridoxal-phosphate-dependent aminotransferase family. SerC subfamily.</text>
</comment>
<sequence length="362" mass="39746">MNQTIFNFSAGPAVLPHVVLEQVQAELLDWHGSGMSVMEMSHRGPEFMKIAAEAEQDLRDLLDIPANYKILFLQGGATLQFAMVPLNLMRGHGKASYVQTGIWSKKAIAEARRFTAVEIAASNEDRHASYVPMQADWQVSPDTAYVHITGNETIGGVEFDFIPDLGDIPLVSDASSHILSKPTDVSRFGLIYAGAQKNIGPAGLTLVIVRDDLLGHAPANTATMLDYAVYAKEESMHNTPPTFAIYVAGLVFKWLKQLGGLERMAEINARKARLLYDAIDESRGFYANPVETRNRSRMNVPFTLADAAMDEAFLKGARSHGLIQLKGHRSVGGMRASIYNAMPEAGVQILADYLRDFARQHG</sequence>
<dbReference type="EC" id="2.6.1.52" evidence="1"/>
<dbReference type="EMBL" id="CP001132">
    <property type="protein sequence ID" value="ACH83259.1"/>
    <property type="molecule type" value="Genomic_DNA"/>
</dbReference>
<dbReference type="RefSeq" id="WP_012536419.1">
    <property type="nucleotide sequence ID" value="NC_011206.1"/>
</dbReference>
<dbReference type="SMR" id="B5EPR5"/>
<dbReference type="GeneID" id="65280219"/>
<dbReference type="KEGG" id="afe:Lferr_1017"/>
<dbReference type="eggNOG" id="COG1932">
    <property type="taxonomic scope" value="Bacteria"/>
</dbReference>
<dbReference type="HOGENOM" id="CLU_034866_0_2_6"/>
<dbReference type="UniPathway" id="UPA00135">
    <property type="reaction ID" value="UER00197"/>
</dbReference>
<dbReference type="UniPathway" id="UPA00244">
    <property type="reaction ID" value="UER00311"/>
</dbReference>
<dbReference type="GO" id="GO:0005737">
    <property type="term" value="C:cytoplasm"/>
    <property type="evidence" value="ECO:0007669"/>
    <property type="project" value="UniProtKB-SubCell"/>
</dbReference>
<dbReference type="GO" id="GO:0004648">
    <property type="term" value="F:O-phospho-L-serine:2-oxoglutarate aminotransferase activity"/>
    <property type="evidence" value="ECO:0007669"/>
    <property type="project" value="UniProtKB-UniRule"/>
</dbReference>
<dbReference type="GO" id="GO:0030170">
    <property type="term" value="F:pyridoxal phosphate binding"/>
    <property type="evidence" value="ECO:0007669"/>
    <property type="project" value="UniProtKB-UniRule"/>
</dbReference>
<dbReference type="GO" id="GO:0006564">
    <property type="term" value="P:L-serine biosynthetic process"/>
    <property type="evidence" value="ECO:0007669"/>
    <property type="project" value="UniProtKB-UniRule"/>
</dbReference>
<dbReference type="GO" id="GO:0008615">
    <property type="term" value="P:pyridoxine biosynthetic process"/>
    <property type="evidence" value="ECO:0007669"/>
    <property type="project" value="UniProtKB-UniRule"/>
</dbReference>
<dbReference type="CDD" id="cd00611">
    <property type="entry name" value="PSAT_like"/>
    <property type="match status" value="1"/>
</dbReference>
<dbReference type="FunFam" id="3.40.640.10:FF:000010">
    <property type="entry name" value="Phosphoserine aminotransferase"/>
    <property type="match status" value="1"/>
</dbReference>
<dbReference type="FunFam" id="3.90.1150.10:FF:000006">
    <property type="entry name" value="Phosphoserine aminotransferase"/>
    <property type="match status" value="1"/>
</dbReference>
<dbReference type="Gene3D" id="3.90.1150.10">
    <property type="entry name" value="Aspartate Aminotransferase, domain 1"/>
    <property type="match status" value="1"/>
</dbReference>
<dbReference type="Gene3D" id="3.40.640.10">
    <property type="entry name" value="Type I PLP-dependent aspartate aminotransferase-like (Major domain)"/>
    <property type="match status" value="1"/>
</dbReference>
<dbReference type="HAMAP" id="MF_00160">
    <property type="entry name" value="SerC_aminotrans_5"/>
    <property type="match status" value="1"/>
</dbReference>
<dbReference type="InterPro" id="IPR000192">
    <property type="entry name" value="Aminotrans_V_dom"/>
</dbReference>
<dbReference type="InterPro" id="IPR020578">
    <property type="entry name" value="Aminotrans_V_PyrdxlP_BS"/>
</dbReference>
<dbReference type="InterPro" id="IPR022278">
    <property type="entry name" value="Pser_aminoTfrase"/>
</dbReference>
<dbReference type="InterPro" id="IPR015424">
    <property type="entry name" value="PyrdxlP-dep_Trfase"/>
</dbReference>
<dbReference type="InterPro" id="IPR015421">
    <property type="entry name" value="PyrdxlP-dep_Trfase_major"/>
</dbReference>
<dbReference type="InterPro" id="IPR015422">
    <property type="entry name" value="PyrdxlP-dep_Trfase_small"/>
</dbReference>
<dbReference type="NCBIfam" id="NF003764">
    <property type="entry name" value="PRK05355.1"/>
    <property type="match status" value="1"/>
</dbReference>
<dbReference type="NCBIfam" id="TIGR01364">
    <property type="entry name" value="serC_1"/>
    <property type="match status" value="1"/>
</dbReference>
<dbReference type="PANTHER" id="PTHR43247">
    <property type="entry name" value="PHOSPHOSERINE AMINOTRANSFERASE"/>
    <property type="match status" value="1"/>
</dbReference>
<dbReference type="PANTHER" id="PTHR43247:SF1">
    <property type="entry name" value="PHOSPHOSERINE AMINOTRANSFERASE"/>
    <property type="match status" value="1"/>
</dbReference>
<dbReference type="Pfam" id="PF00266">
    <property type="entry name" value="Aminotran_5"/>
    <property type="match status" value="1"/>
</dbReference>
<dbReference type="PIRSF" id="PIRSF000525">
    <property type="entry name" value="SerC"/>
    <property type="match status" value="1"/>
</dbReference>
<dbReference type="SUPFAM" id="SSF53383">
    <property type="entry name" value="PLP-dependent transferases"/>
    <property type="match status" value="1"/>
</dbReference>
<dbReference type="PROSITE" id="PS00595">
    <property type="entry name" value="AA_TRANSFER_CLASS_5"/>
    <property type="match status" value="1"/>
</dbReference>